<comment type="function">
    <text evidence="1">Component of the cytochrome b6-f complex, which mediates electron transfer between photosystem II (PSII) and photosystem I (PSI), cyclic electron flow around PSI, and state transitions.</text>
</comment>
<comment type="cofactor">
    <cofactor evidence="1">
        <name>heme b</name>
        <dbReference type="ChEBI" id="CHEBI:60344"/>
    </cofactor>
    <text evidence="1">Binds 2 heme b groups non-covalently with two histidine residues as axial ligands.</text>
</comment>
<comment type="cofactor">
    <cofactor evidence="1">
        <name>heme c</name>
        <dbReference type="ChEBI" id="CHEBI:61717"/>
    </cofactor>
    <text evidence="1">Binds one heme group covalently by a single cysteine link with no axial amino acid ligand. This heme was named heme ci.</text>
</comment>
<comment type="subunit">
    <text evidence="1">The 4 large subunits of the cytochrome b6-f complex are cytochrome b6, subunit IV (17 kDa polypeptide, PetD), cytochrome f and the Rieske protein, while the 4 small subunits are PetG, PetL, PetM and PetN. The complex functions as a dimer.</text>
</comment>
<comment type="subcellular location">
    <subcellularLocation>
        <location evidence="1">Plastid</location>
        <location evidence="1">Chloroplast thylakoid membrane</location>
        <topology evidence="1">Multi-pass membrane protein</topology>
    </subcellularLocation>
</comment>
<comment type="miscellaneous">
    <text evidence="1">Heme 1 (or BH or b566) is high-potential and absorbs at about 566 nm, and heme 2 (or BL or b562) is low-potential and absorbs at about 562 nm.</text>
</comment>
<comment type="similarity">
    <text evidence="1">Belongs to the cytochrome b family. PetB subfamily.</text>
</comment>
<name>CYB6_NYMAL</name>
<proteinExistence type="inferred from homology"/>
<keyword id="KW-0150">Chloroplast</keyword>
<keyword id="KW-0249">Electron transport</keyword>
<keyword id="KW-0349">Heme</keyword>
<keyword id="KW-0408">Iron</keyword>
<keyword id="KW-0472">Membrane</keyword>
<keyword id="KW-0479">Metal-binding</keyword>
<keyword id="KW-0602">Photosynthesis</keyword>
<keyword id="KW-0934">Plastid</keyword>
<keyword id="KW-0793">Thylakoid</keyword>
<keyword id="KW-0812">Transmembrane</keyword>
<keyword id="KW-1133">Transmembrane helix</keyword>
<keyword id="KW-0813">Transport</keyword>
<sequence>MSKVYDWFEERLEIQAIADDITSKYVPPHVNIFHCLGGITLTCFLVQVATGFAMTFYYRPTVTEAFASVQYIMTEANFGWLIRSVHRWSASMMVLMMILHVFRVYLTGGFKKPRELTWVTGVVLAVLTASFGVTGYSLPWDQIGYWAVKIVTGVPEAIPIVGSPLVELLRGSASVGQSTLTRFYSLHTFVLPLLTAVFMLMHFSMIRKQGISGPL</sequence>
<reference key="1">
    <citation type="journal article" date="2004" name="Mol. Biol. Evol.">
        <title>The chloroplast genome of Nymphaea alba: whole-genome analyses and the problem of identifying the most basal angiosperm.</title>
        <authorList>
            <person name="Goremykin V.V."/>
            <person name="Hirsch-Ernst K.I."/>
            <person name="Woelfl S."/>
            <person name="Hellwig F.H."/>
        </authorList>
    </citation>
    <scope>NUCLEOTIDE SEQUENCE [LARGE SCALE GENOMIC DNA]</scope>
</reference>
<feature type="chain" id="PRO_0000061805" description="Cytochrome b6">
    <location>
        <begin position="1"/>
        <end position="215"/>
    </location>
</feature>
<feature type="transmembrane region" description="Helical" evidence="1">
    <location>
        <begin position="32"/>
        <end position="52"/>
    </location>
</feature>
<feature type="transmembrane region" description="Helical" evidence="1">
    <location>
        <begin position="90"/>
        <end position="110"/>
    </location>
</feature>
<feature type="transmembrane region" description="Helical" evidence="1">
    <location>
        <begin position="116"/>
        <end position="136"/>
    </location>
</feature>
<feature type="transmembrane region" description="Helical" evidence="1">
    <location>
        <begin position="186"/>
        <end position="206"/>
    </location>
</feature>
<feature type="binding site" description="covalent" evidence="1">
    <location>
        <position position="35"/>
    </location>
    <ligand>
        <name>heme c</name>
        <dbReference type="ChEBI" id="CHEBI:61717"/>
    </ligand>
</feature>
<feature type="binding site" description="axial binding residue" evidence="1">
    <location>
        <position position="86"/>
    </location>
    <ligand>
        <name>heme b</name>
        <dbReference type="ChEBI" id="CHEBI:60344"/>
        <label>2</label>
    </ligand>
    <ligandPart>
        <name>Fe</name>
        <dbReference type="ChEBI" id="CHEBI:18248"/>
    </ligandPart>
</feature>
<feature type="binding site" description="axial binding residue" evidence="1">
    <location>
        <position position="100"/>
    </location>
    <ligand>
        <name>heme b</name>
        <dbReference type="ChEBI" id="CHEBI:60344"/>
        <label>1</label>
    </ligand>
    <ligandPart>
        <name>Fe</name>
        <dbReference type="ChEBI" id="CHEBI:18248"/>
    </ligandPart>
</feature>
<feature type="binding site" description="axial binding residue" evidence="1">
    <location>
        <position position="187"/>
    </location>
    <ligand>
        <name>heme b</name>
        <dbReference type="ChEBI" id="CHEBI:60344"/>
        <label>2</label>
    </ligand>
    <ligandPart>
        <name>Fe</name>
        <dbReference type="ChEBI" id="CHEBI:18248"/>
    </ligandPart>
</feature>
<feature type="binding site" description="axial binding residue" evidence="1">
    <location>
        <position position="202"/>
    </location>
    <ligand>
        <name>heme b</name>
        <dbReference type="ChEBI" id="CHEBI:60344"/>
        <label>1</label>
    </ligand>
    <ligandPart>
        <name>Fe</name>
        <dbReference type="ChEBI" id="CHEBI:18248"/>
    </ligandPart>
</feature>
<gene>
    <name evidence="1" type="primary">petB</name>
</gene>
<geneLocation type="chloroplast"/>
<organism>
    <name type="scientific">Nymphaea alba</name>
    <name type="common">White water-lily</name>
    <name type="synonym">Castalia alba</name>
    <dbReference type="NCBI Taxonomy" id="34301"/>
    <lineage>
        <taxon>Eukaryota</taxon>
        <taxon>Viridiplantae</taxon>
        <taxon>Streptophyta</taxon>
        <taxon>Embryophyta</taxon>
        <taxon>Tracheophyta</taxon>
        <taxon>Spermatophyta</taxon>
        <taxon>Magnoliopsida</taxon>
        <taxon>Nymphaeales</taxon>
        <taxon>Nymphaeaceae</taxon>
        <taxon>Nymphaea</taxon>
    </lineage>
</organism>
<dbReference type="EMBL" id="AJ627251">
    <property type="protein sequence ID" value="CAF28624.1"/>
    <property type="molecule type" value="Genomic_DNA"/>
</dbReference>
<dbReference type="RefSeq" id="YP_053184.1">
    <property type="nucleotide sequence ID" value="NC_006050.1"/>
</dbReference>
<dbReference type="SMR" id="Q6EW22"/>
<dbReference type="GeneID" id="2896225"/>
<dbReference type="GO" id="GO:0009535">
    <property type="term" value="C:chloroplast thylakoid membrane"/>
    <property type="evidence" value="ECO:0007669"/>
    <property type="project" value="UniProtKB-SubCell"/>
</dbReference>
<dbReference type="GO" id="GO:0045158">
    <property type="term" value="F:electron transporter, transferring electrons within cytochrome b6/f complex of photosystem II activity"/>
    <property type="evidence" value="ECO:0007669"/>
    <property type="project" value="UniProtKB-UniRule"/>
</dbReference>
<dbReference type="GO" id="GO:0046872">
    <property type="term" value="F:metal ion binding"/>
    <property type="evidence" value="ECO:0007669"/>
    <property type="project" value="UniProtKB-KW"/>
</dbReference>
<dbReference type="GO" id="GO:0016491">
    <property type="term" value="F:oxidoreductase activity"/>
    <property type="evidence" value="ECO:0007669"/>
    <property type="project" value="InterPro"/>
</dbReference>
<dbReference type="GO" id="GO:0015979">
    <property type="term" value="P:photosynthesis"/>
    <property type="evidence" value="ECO:0007669"/>
    <property type="project" value="UniProtKB-UniRule"/>
</dbReference>
<dbReference type="GO" id="GO:0022904">
    <property type="term" value="P:respiratory electron transport chain"/>
    <property type="evidence" value="ECO:0007669"/>
    <property type="project" value="InterPro"/>
</dbReference>
<dbReference type="CDD" id="cd00284">
    <property type="entry name" value="Cytochrome_b_N"/>
    <property type="match status" value="1"/>
</dbReference>
<dbReference type="FunFam" id="1.20.810.10:FF:000001">
    <property type="entry name" value="Cytochrome b6"/>
    <property type="match status" value="1"/>
</dbReference>
<dbReference type="Gene3D" id="1.20.810.10">
    <property type="entry name" value="Cytochrome Bc1 Complex, Chain C"/>
    <property type="match status" value="1"/>
</dbReference>
<dbReference type="HAMAP" id="MF_00633">
    <property type="entry name" value="Cytb6_f_cytb6"/>
    <property type="match status" value="1"/>
</dbReference>
<dbReference type="InterPro" id="IPR005797">
    <property type="entry name" value="Cyt_b/b6_N"/>
</dbReference>
<dbReference type="InterPro" id="IPR023530">
    <property type="entry name" value="Cyt_B6_PetB"/>
</dbReference>
<dbReference type="InterPro" id="IPR027387">
    <property type="entry name" value="Cytb/b6-like_sf"/>
</dbReference>
<dbReference type="InterPro" id="IPR048259">
    <property type="entry name" value="Cytochrome_b_N_euk/bac"/>
</dbReference>
<dbReference type="InterPro" id="IPR016174">
    <property type="entry name" value="Di-haem_cyt_TM"/>
</dbReference>
<dbReference type="NCBIfam" id="NF002990">
    <property type="entry name" value="PRK03735.1"/>
    <property type="match status" value="1"/>
</dbReference>
<dbReference type="PANTHER" id="PTHR19271">
    <property type="entry name" value="CYTOCHROME B"/>
    <property type="match status" value="1"/>
</dbReference>
<dbReference type="PANTHER" id="PTHR19271:SF16">
    <property type="entry name" value="CYTOCHROME B"/>
    <property type="match status" value="1"/>
</dbReference>
<dbReference type="Pfam" id="PF00033">
    <property type="entry name" value="Cytochrome_B"/>
    <property type="match status" value="1"/>
</dbReference>
<dbReference type="PIRSF" id="PIRSF000032">
    <property type="entry name" value="Cytochrome_b6"/>
    <property type="match status" value="1"/>
</dbReference>
<dbReference type="SUPFAM" id="SSF81342">
    <property type="entry name" value="Transmembrane di-heme cytochromes"/>
    <property type="match status" value="1"/>
</dbReference>
<dbReference type="PROSITE" id="PS51002">
    <property type="entry name" value="CYTB_NTER"/>
    <property type="match status" value="1"/>
</dbReference>
<evidence type="ECO:0000255" key="1">
    <source>
        <dbReference type="HAMAP-Rule" id="MF_00633"/>
    </source>
</evidence>
<accession>Q6EW22</accession>
<protein>
    <recommendedName>
        <fullName evidence="1">Cytochrome b6</fullName>
    </recommendedName>
</protein>